<protein>
    <recommendedName>
        <fullName>Phospholipase B</fullName>
        <shortName>PLB</shortName>
        <ecNumber>3.1.1.-</ecNumber>
    </recommendedName>
</protein>
<evidence type="ECO:0000250" key="1"/>
<evidence type="ECO:0000255" key="2"/>
<evidence type="ECO:0000305" key="3"/>
<dbReference type="EC" id="3.1.1.-"/>
<dbReference type="EMBL" id="HQ414105">
    <property type="protein sequence ID" value="AEJ31983.1"/>
    <property type="molecule type" value="mRNA"/>
</dbReference>
<dbReference type="EMBL" id="JU175433">
    <property type="protein sequence ID" value="AFJ50957.1"/>
    <property type="molecule type" value="mRNA"/>
</dbReference>
<dbReference type="SMR" id="F8S101"/>
<dbReference type="GO" id="GO:0005576">
    <property type="term" value="C:extracellular region"/>
    <property type="evidence" value="ECO:0007669"/>
    <property type="project" value="UniProtKB-SubCell"/>
</dbReference>
<dbReference type="GO" id="GO:0004620">
    <property type="term" value="F:phospholipase activity"/>
    <property type="evidence" value="ECO:0007669"/>
    <property type="project" value="InterPro"/>
</dbReference>
<dbReference type="GO" id="GO:0090729">
    <property type="term" value="F:toxin activity"/>
    <property type="evidence" value="ECO:0007669"/>
    <property type="project" value="UniProtKB-KW"/>
</dbReference>
<dbReference type="GO" id="GO:0031640">
    <property type="term" value="P:killing of cells of another organism"/>
    <property type="evidence" value="ECO:0007669"/>
    <property type="project" value="UniProtKB-KW"/>
</dbReference>
<dbReference type="GO" id="GO:0009395">
    <property type="term" value="P:phospholipid catabolic process"/>
    <property type="evidence" value="ECO:0007669"/>
    <property type="project" value="TreeGrafter"/>
</dbReference>
<dbReference type="Gene3D" id="3.60.60.20">
    <property type="match status" value="1"/>
</dbReference>
<dbReference type="Gene3D" id="2.10.70.60">
    <property type="entry name" value="Phospholipase B-like, domain 1"/>
    <property type="match status" value="1"/>
</dbReference>
<dbReference type="Gene3D" id="1.10.439.20">
    <property type="entry name" value="Phospholipase B-like, domain 2"/>
    <property type="match status" value="1"/>
</dbReference>
<dbReference type="InterPro" id="IPR007000">
    <property type="entry name" value="PLipase_B-like"/>
</dbReference>
<dbReference type="InterPro" id="IPR043040">
    <property type="entry name" value="PLipase_B-like_dom1"/>
</dbReference>
<dbReference type="InterPro" id="IPR043041">
    <property type="entry name" value="PLipase_B-like_dom2"/>
</dbReference>
<dbReference type="InterPro" id="IPR043042">
    <property type="entry name" value="PLipase_B-like_dom3"/>
</dbReference>
<dbReference type="PANTHER" id="PTHR12370:SF1">
    <property type="entry name" value="PHOSPHOLIPASE B-LIKE 1"/>
    <property type="match status" value="1"/>
</dbReference>
<dbReference type="PANTHER" id="PTHR12370">
    <property type="entry name" value="PHOSPHOLIPASE B-RELATED"/>
    <property type="match status" value="1"/>
</dbReference>
<dbReference type="Pfam" id="PF04916">
    <property type="entry name" value="Phospholip_B"/>
    <property type="match status" value="1"/>
</dbReference>
<feature type="signal peptide" evidence="2">
    <location>
        <begin position="1"/>
        <end position="35"/>
    </location>
</feature>
<feature type="chain" id="PRO_5000771370" description="Phospholipase B">
    <location>
        <begin position="36"/>
        <end position="553"/>
    </location>
</feature>
<feature type="glycosylation site" description="N-linked (GlcNAc...) asparagine" evidence="2">
    <location>
        <position position="313"/>
    </location>
</feature>
<feature type="glycosylation site" description="N-linked (GlcNAc...) asparagine" evidence="2">
    <location>
        <position position="416"/>
    </location>
</feature>
<feature type="glycosylation site" description="N-linked (GlcNAc...) asparagine" evidence="2">
    <location>
        <position position="531"/>
    </location>
</feature>
<feature type="sequence conflict" description="In Ref. 2; AFJ50957." evidence="3" ref="2">
    <original>LFG</original>
    <variation>FLV</variation>
    <location>
        <begin position="288"/>
        <end position="290"/>
    </location>
</feature>
<sequence>MIRFGNPSSSDKRRQRCRSWYWGGLLLLWAVAETRADIHYATVYWLEAEKSFQIKDVLDKNGDAYGYYNDAIQSTGWGILEIKAGYGNQPISNEILMYAAGFLEGYLTASHMSDHFANLFPLMIKNVIIEQKVKDFIQKQDEWTRQQIKNNKDDPFWRNAGYVIAQLDGLYMGNVEWAKRQKRTPLTDFEISFLNAIGDLLDLIPALHSELRKSDFRSMPDVSRIYQWDMGHCSALIKVLPGYENIYFAHSSWFTYAATLRIYKHLDFRITDPQTKTGRASFSSYPGLFGSLDDFYILGSGLIMLQTTNSVFNLSLLKKVVPESLFAWERVRIANMMADSGKTWAETFEKQNSGTYNNQYMILDTKKIKLQRSLEDGTLYIIEQVPKLVKYSDQTKVLRNGYWPSYNIPFDKEIYNMSGYGEYVQRHGLEFSYEMAPRAKIFRRDQGKVTDMESMKFIMRYNNYKEDPYAKHNPCNTICCRQDLDRRTPVPAGCYDSKVADISMAAKFTAYAINGPPVEKGLPVFSWVHFNKTKHQGLPESYNFDFVTMKPVL</sequence>
<name>PLB_CROAD</name>
<accession>F8S101</accession>
<accession>J3S4V6</accession>
<proteinExistence type="evidence at protein level"/>
<comment type="function">
    <text evidence="3">May cause hemolysis or may be involved in protein folding and translation.</text>
</comment>
<comment type="subcellular location">
    <subcellularLocation>
        <location evidence="1">Secreted</location>
    </subcellularLocation>
</comment>
<comment type="tissue specificity">
    <text>Expressed by the venom gland.</text>
</comment>
<comment type="similarity">
    <text evidence="3">Belongs to the phospholipase B-like family.</text>
</comment>
<organism>
    <name type="scientific">Crotalus adamanteus</name>
    <name type="common">Eastern diamondback rattlesnake</name>
    <dbReference type="NCBI Taxonomy" id="8729"/>
    <lineage>
        <taxon>Eukaryota</taxon>
        <taxon>Metazoa</taxon>
        <taxon>Chordata</taxon>
        <taxon>Craniata</taxon>
        <taxon>Vertebrata</taxon>
        <taxon>Euteleostomi</taxon>
        <taxon>Lepidosauria</taxon>
        <taxon>Squamata</taxon>
        <taxon>Bifurcata</taxon>
        <taxon>Unidentata</taxon>
        <taxon>Episquamata</taxon>
        <taxon>Toxicofera</taxon>
        <taxon>Serpentes</taxon>
        <taxon>Colubroidea</taxon>
        <taxon>Viperidae</taxon>
        <taxon>Crotalinae</taxon>
        <taxon>Crotalus</taxon>
    </lineage>
</organism>
<keyword id="KW-0204">Cytolysis</keyword>
<keyword id="KW-0325">Glycoprotein</keyword>
<keyword id="KW-0354">Hemolysis</keyword>
<keyword id="KW-0378">Hydrolase</keyword>
<keyword id="KW-0442">Lipid degradation</keyword>
<keyword id="KW-0443">Lipid metabolism</keyword>
<keyword id="KW-0964">Secreted</keyword>
<keyword id="KW-0732">Signal</keyword>
<keyword id="KW-0800">Toxin</keyword>
<reference key="1">
    <citation type="journal article" date="2011" name="Toxicon">
        <title>A high-throughput venom-gland transcriptome for the eastern diamondback rattlesnake (Crotalus adamanteus) and evidence for pervasive positive selection across toxin classes.</title>
        <authorList>
            <person name="Rokyta D.R."/>
            <person name="Wray K.P."/>
            <person name="Lemmon A.R."/>
            <person name="Lemmon E.M."/>
            <person name="Caudle S.B."/>
        </authorList>
    </citation>
    <scope>NUCLEOTIDE SEQUENCE [MRNA]</scope>
    <source>
        <tissue>Venom gland</tissue>
    </source>
</reference>
<reference key="2">
    <citation type="journal article" date="2012" name="BMC Genomics">
        <title>The venom-gland transcriptome of the eastern diamondback rattlesnake (Crotalus adamanteus).</title>
        <authorList>
            <person name="Rokyta D.R."/>
            <person name="Lemmon A.R."/>
            <person name="Margres M.J."/>
            <person name="Aronow K."/>
        </authorList>
    </citation>
    <scope>NUCLEOTIDE SEQUENCE [MRNA]</scope>
    <scope>PROBABLE FUNCTION</scope>
    <source>
        <tissue>Venom gland</tissue>
    </source>
</reference>
<reference key="3">
    <citation type="journal article" date="2014" name="J. Proteomics">
        <title>Linking the transcriptome and proteome to characterize the venom of the eastern diamondback rattlesnake (Crotalus adamanteus).</title>
        <authorList>
            <person name="Margres M.J."/>
            <person name="McGivern J.J."/>
            <person name="Wray K.P."/>
            <person name="Seavy M."/>
            <person name="Calvin K."/>
            <person name="Rokyta D.R."/>
        </authorList>
    </citation>
    <scope>IDENTIFICATION BY MASS SPECTROMETRY</scope>
    <source>
        <tissue>Venom</tissue>
    </source>
</reference>